<name>NSMA2_HUMAN</name>
<organism>
    <name type="scientific">Homo sapiens</name>
    <name type="common">Human</name>
    <dbReference type="NCBI Taxonomy" id="9606"/>
    <lineage>
        <taxon>Eukaryota</taxon>
        <taxon>Metazoa</taxon>
        <taxon>Chordata</taxon>
        <taxon>Craniata</taxon>
        <taxon>Vertebrata</taxon>
        <taxon>Euteleostomi</taxon>
        <taxon>Mammalia</taxon>
        <taxon>Eutheria</taxon>
        <taxon>Euarchontoglires</taxon>
        <taxon>Primates</taxon>
        <taxon>Haplorrhini</taxon>
        <taxon>Catarrhini</taxon>
        <taxon>Hominidae</taxon>
        <taxon>Homo</taxon>
    </lineage>
</organism>
<sequence>MVLYTTPFPNSCLSALHCVSWALIFPCYWLVDRLAASFIPTTYEKRQRADDPCCLQLLCTALFTPIYLALLVASLPFAFLGFLFWSPLQSARRPYIYSRLEDKGLAGGAALLSEWKGTGPGKSFCFATANVCLLPDSLARVNNLFNTQARAKEIGQRIRNGAARPQIKIYIDSPTNTSISAASFSSLVSPQGGDGVARAVPGSIKRTASVEYKGDGGRHPGDEAANGPASGDPVDSSSPEDACIVRIGGEEGGRPPEADDPVPGGQARNGAGGGPRGQTPNHNQQDGDSGSLGSPSASRESLVKGRAGPDTSASGEPGANSKLLYKASVVKKAAARRRRHPDEAFDHEVSAFFPANLDFLCLQEVFDKRAATKLKEQLHGYFEYILYDVGVYGCQGCCSFKCLNSGLLFASRYPIMDVAYHCYPNKCNDDALASKGALFLKVQVGSTPQDQRIVGYIACTHLHAPQEDSAIRCGQLDLLQDWLADFRKSTSSSSAANPEELVAFDVVCGDFNFDNCSSDDKLEQQHSLFTHYRDPCRLGPGEEKPWAIGTLLDTNGLYDEDVCTPDNLQKVLESEEGRREYLAFPTSKSSGQKGRKELLKGNGRRIDYMLHAEEGLCPDWKAEVEEFSFITQLSGLTDHLPVAMRLMVSSGEEEA</sequence>
<accession>Q9NY59</accession>
<accession>B7ZL82</accession>
<accession>Q2M1S8</accession>
<proteinExistence type="evidence at protein level"/>
<gene>
    <name evidence="14" type="primary">SMPD3</name>
</gene>
<keyword id="KW-0002">3D-structure</keyword>
<keyword id="KW-0025">Alternative splicing</keyword>
<keyword id="KW-0131">Cell cycle</keyword>
<keyword id="KW-1003">Cell membrane</keyword>
<keyword id="KW-0217">Developmental protein</keyword>
<keyword id="KW-0333">Golgi apparatus</keyword>
<keyword id="KW-0378">Hydrolase</keyword>
<keyword id="KW-0443">Lipid metabolism</keyword>
<keyword id="KW-0449">Lipoprotein</keyword>
<keyword id="KW-0460">Magnesium</keyword>
<keyword id="KW-0472">Membrane</keyword>
<keyword id="KW-0479">Metal-binding</keyword>
<keyword id="KW-0564">Palmitate</keyword>
<keyword id="KW-0597">Phosphoprotein</keyword>
<keyword id="KW-1267">Proteomics identification</keyword>
<keyword id="KW-1185">Reference proteome</keyword>
<keyword id="KW-0746">Sphingolipid metabolism</keyword>
<comment type="function">
    <text evidence="2 3 6 7 8">Catalyzes the hydrolysis of sphingomyelin to form ceramide and phosphocholine. Ceramide mediates numerous cellular functions, such as apoptosis and growth arrest, and is capable of regulating these 2 cellular events independently. Also hydrolyzes sphingosylphosphocholine. Regulates the cell cycle by acting as a growth suppressor in confluent cells. Probably acts as a regulator of postnatal development and participates in bone and dentin mineralization (PubMed:10823942, PubMed:14741383, PubMed:15051724). Binds to anionic phospholipids (APLs) such as phosphatidylserine (PS) and phosphatidic acid (PA) that modulate enzymatic activity and subcellular location. May be involved in IL-1-beta-induced JNK activation in hepatocytes (By similarity). May act as a mediator in transcriptional regulation of NOS2/iNOS via the NF-kappa-B activation under inflammatory conditions (By similarity).</text>
</comment>
<comment type="catalytic activity">
    <reaction evidence="8">
        <text>a sphingomyelin + H2O = phosphocholine + an N-acylsphing-4-enine + H(+)</text>
        <dbReference type="Rhea" id="RHEA:19253"/>
        <dbReference type="ChEBI" id="CHEBI:15377"/>
        <dbReference type="ChEBI" id="CHEBI:15378"/>
        <dbReference type="ChEBI" id="CHEBI:17636"/>
        <dbReference type="ChEBI" id="CHEBI:52639"/>
        <dbReference type="ChEBI" id="CHEBI:295975"/>
        <dbReference type="EC" id="3.1.4.12"/>
    </reaction>
    <physiologicalReaction direction="left-to-right" evidence="13">
        <dbReference type="Rhea" id="RHEA:19254"/>
    </physiologicalReaction>
</comment>
<comment type="catalytic activity">
    <reaction evidence="8">
        <text>N-(15Z-tetracosenoyl)sphing-4-enine-1-phosphocholine + H2O = N-(15Z-tetracosenoyl)-sphing-4-enine + phosphocholine + H(+)</text>
        <dbReference type="Rhea" id="RHEA:45320"/>
        <dbReference type="ChEBI" id="CHEBI:15377"/>
        <dbReference type="ChEBI" id="CHEBI:15378"/>
        <dbReference type="ChEBI" id="CHEBI:74450"/>
        <dbReference type="ChEBI" id="CHEBI:74535"/>
        <dbReference type="ChEBI" id="CHEBI:295975"/>
    </reaction>
    <physiologicalReaction direction="left-to-right" evidence="13">
        <dbReference type="Rhea" id="RHEA:45321"/>
    </physiologicalReaction>
</comment>
<comment type="catalytic activity">
    <reaction evidence="8">
        <text>N-(tetracosanoyl)-sphing-4-enine-1-phosphocholine + H2O = N-tetracosanoyl-sphing-4-enine + phosphocholine + H(+)</text>
        <dbReference type="Rhea" id="RHEA:45324"/>
        <dbReference type="ChEBI" id="CHEBI:15377"/>
        <dbReference type="ChEBI" id="CHEBI:15378"/>
        <dbReference type="ChEBI" id="CHEBI:72965"/>
        <dbReference type="ChEBI" id="CHEBI:83360"/>
        <dbReference type="ChEBI" id="CHEBI:295975"/>
    </reaction>
    <physiologicalReaction direction="left-to-right" evidence="13">
        <dbReference type="Rhea" id="RHEA:45325"/>
    </physiologicalReaction>
</comment>
<comment type="catalytic activity">
    <reaction evidence="7">
        <text>an N-(acyl)-sphingosylphosphocholine + H2O = an N-acyl-sphingoid base + phosphocholine + H(+)</text>
        <dbReference type="Rhea" id="RHEA:45300"/>
        <dbReference type="ChEBI" id="CHEBI:15377"/>
        <dbReference type="ChEBI" id="CHEBI:15378"/>
        <dbReference type="ChEBI" id="CHEBI:64583"/>
        <dbReference type="ChEBI" id="CHEBI:83273"/>
        <dbReference type="ChEBI" id="CHEBI:295975"/>
    </reaction>
    <physiologicalReaction direction="left-to-right" evidence="12">
        <dbReference type="Rhea" id="RHEA:45301"/>
    </physiologicalReaction>
</comment>
<comment type="catalytic activity">
    <reaction evidence="7">
        <text>1-hexadecanoyl-sn-glycero-3-phosphocholine + H2O = 1-hexadecanoyl-sn-glycerol + phosphocholine + H(+)</text>
        <dbReference type="Rhea" id="RHEA:41119"/>
        <dbReference type="ChEBI" id="CHEBI:15377"/>
        <dbReference type="ChEBI" id="CHEBI:15378"/>
        <dbReference type="ChEBI" id="CHEBI:72998"/>
        <dbReference type="ChEBI" id="CHEBI:75542"/>
        <dbReference type="ChEBI" id="CHEBI:295975"/>
    </reaction>
    <physiologicalReaction direction="left-to-right" evidence="12">
        <dbReference type="Rhea" id="RHEA:41120"/>
    </physiologicalReaction>
</comment>
<comment type="catalytic activity">
    <reaction evidence="7">
        <text>1-O-octadecyl-sn-glycero-3-phosphocholine + H2O = 1-O-octadecyl-sn-glycerol + phosphocholine + H(+)</text>
        <dbReference type="Rhea" id="RHEA:39923"/>
        <dbReference type="ChEBI" id="CHEBI:15377"/>
        <dbReference type="ChEBI" id="CHEBI:15378"/>
        <dbReference type="ChEBI" id="CHEBI:74001"/>
        <dbReference type="ChEBI" id="CHEBI:75216"/>
        <dbReference type="ChEBI" id="CHEBI:295975"/>
    </reaction>
    <physiologicalReaction direction="left-to-right" evidence="12">
        <dbReference type="Rhea" id="RHEA:39924"/>
    </physiologicalReaction>
</comment>
<comment type="catalytic activity">
    <reaction evidence="7">
        <text>a sphingosylphosphocholine + H2O = a sphingoid base + phosphocholine + H(+)</text>
        <dbReference type="Rhea" id="RHEA:45296"/>
        <dbReference type="ChEBI" id="CHEBI:15377"/>
        <dbReference type="ChEBI" id="CHEBI:15378"/>
        <dbReference type="ChEBI" id="CHEBI:84410"/>
        <dbReference type="ChEBI" id="CHEBI:85171"/>
        <dbReference type="ChEBI" id="CHEBI:295975"/>
    </reaction>
    <physiologicalReaction direction="left-to-right" evidence="12">
        <dbReference type="Rhea" id="RHEA:45297"/>
    </physiologicalReaction>
</comment>
<comment type="catalytic activity">
    <reaction evidence="3">
        <text>N-(hexadecanoyl)-sphing-4-enine-1-phosphocholine + H2O = N-hexadecanoylsphing-4-enine + phosphocholine + H(+)</text>
        <dbReference type="Rhea" id="RHEA:45644"/>
        <dbReference type="ChEBI" id="CHEBI:15377"/>
        <dbReference type="ChEBI" id="CHEBI:15378"/>
        <dbReference type="ChEBI" id="CHEBI:72959"/>
        <dbReference type="ChEBI" id="CHEBI:78646"/>
        <dbReference type="ChEBI" id="CHEBI:295975"/>
    </reaction>
    <physiologicalReaction direction="left-to-right" evidence="3">
        <dbReference type="Rhea" id="RHEA:45645"/>
    </physiologicalReaction>
</comment>
<comment type="cofactor">
    <cofactor evidence="6 8">
        <name>Mg(2+)</name>
        <dbReference type="ChEBI" id="CHEBI:18420"/>
    </cofactor>
</comment>
<comment type="activity regulation">
    <text evidence="3 6">Inhibited by nSMase inhibitor GW4869 (PubMed:10823942). Binding of anionic phospholipids (APLs) such as phosphatidylserine (PS) and phosphatidic acid (PA) increases enzymatic activity (By similarity).</text>
</comment>
<comment type="biophysicochemical properties">
    <kinetics>
        <Vmax evidence="7">953.0 nmol/h/mg enzyme with sphingomyelin as substrate (at pH 7.5 and 37 degrees Celsius in presence of 0.1% Triton X-100)</Vmax>
        <Vmax evidence="7">152.0 nmol/h/mg enzyme with sphingosylphosphocholine as substrate (at pH 7.5 and 37 degrees Celsius)</Vmax>
        <Vmax evidence="7">8.6 nmol/h/mg enzyme with 1-O-octadecyl-sn-glycero-3-phosphocholine as substrate (at pH 7.5 and 37 degrees Celsius)</Vmax>
        <Vmax evidence="7">92.2 nmol/h/mg enzyme with 1-hexadecanoyl-sn-glycero-3-phosphocholine as substrate (at pH 7.5 and 37 degrees Celsius)</Vmax>
    </kinetics>
    <phDependence>
        <text>Optimum pH is 7.5.</text>
    </phDependence>
</comment>
<comment type="pathway">
    <text evidence="7 8">Lipid metabolism; sphingolipid metabolism.</text>
</comment>
<comment type="interaction">
    <interactant intactId="EBI-715400">
        <id>Q9NY59</id>
    </interactant>
    <interactant intactId="EBI-923794">
        <id>O75530</id>
        <label>EED</label>
    </interactant>
    <organismsDiffer>false</organismsDiffer>
    <experiments>2</experiments>
</comment>
<comment type="subcellular location">
    <subcellularLocation>
        <location evidence="6">Golgi apparatus membrane</location>
        <topology evidence="6">Lipid-anchor</topology>
    </subcellularLocation>
    <subcellularLocation>
        <location evidence="8">Cell membrane</location>
        <topology evidence="8">Lipid-anchor</topology>
    </subcellularLocation>
    <text>May localize to detergent-resistant subdomains of Golgi membranes of hypothalamic neurosecretory neurons (PubMed:10823942). Localizes to plasma membrane in confluent contact-inhaibited cells (PubMed:15051724).</text>
</comment>
<comment type="alternative products">
    <event type="alternative splicing"/>
    <isoform>
        <id>Q9NY59-1</id>
        <name>1</name>
        <sequence type="displayed"/>
    </isoform>
    <isoform>
        <id>Q9NY59-2</id>
        <name>2</name>
        <sequence type="described" ref="VSP_054334"/>
    </isoform>
</comment>
<comment type="tissue specificity">
    <text evidence="6">Predominantly expressed in brain.</text>
</comment>
<comment type="developmental stage">
    <text>Up-regulated during G0/G1 phases.</text>
</comment>
<comment type="PTM">
    <text evidence="1">Palmitoylated, palmitoylation-deficient proteins are targeted for lysosomal degradation.</text>
</comment>
<comment type="similarity">
    <text evidence="11">Belongs to the neutral sphingomyelinase family.</text>
</comment>
<protein>
    <recommendedName>
        <fullName evidence="11">Sphingomyelin phosphodiesterase 3</fullName>
        <ecNumber evidence="8">3.1.4.12</ecNumber>
    </recommendedName>
    <alternativeName>
        <fullName>Neutral sphingomyelinase 2</fullName>
        <shortName>nSMase-2</shortName>
        <shortName evidence="9">nSMase2</shortName>
    </alternativeName>
    <alternativeName>
        <fullName>Neutral sphingomyelinase II</fullName>
    </alternativeName>
</protein>
<feature type="chain" id="PRO_0000075692" description="Sphingomyelin phosphodiesterase 3">
    <location>
        <begin position="1"/>
        <end position="655"/>
    </location>
</feature>
<feature type="topological domain" description="Cytoplasmic" evidence="4">
    <location>
        <begin position="1"/>
        <end position="10"/>
    </location>
</feature>
<feature type="intramembrane region" description="Helical" evidence="4">
    <location>
        <begin position="11"/>
        <end position="31"/>
    </location>
</feature>
<feature type="topological domain" description="Cytoplasmic" evidence="4">
    <location>
        <begin position="32"/>
        <end position="64"/>
    </location>
</feature>
<feature type="intramembrane region" description="Helical" evidence="4">
    <location>
        <begin position="65"/>
        <end position="85"/>
    </location>
</feature>
<feature type="topological domain" description="Cytoplasmic" evidence="4">
    <location>
        <begin position="86"/>
        <end position="655"/>
    </location>
</feature>
<feature type="region of interest" description="Disordered" evidence="5">
    <location>
        <begin position="210"/>
        <end position="319"/>
    </location>
</feature>
<feature type="compositionally biased region" description="Basic and acidic residues" evidence="5">
    <location>
        <begin position="212"/>
        <end position="222"/>
    </location>
</feature>
<feature type="compositionally biased region" description="Basic and acidic residues" evidence="5">
    <location>
        <begin position="248"/>
        <end position="257"/>
    </location>
</feature>
<feature type="compositionally biased region" description="Polar residues" evidence="5">
    <location>
        <begin position="279"/>
        <end position="299"/>
    </location>
</feature>
<feature type="active site" description="Proton acceptor" evidence="1">
    <location>
        <position position="639"/>
    </location>
</feature>
<feature type="binding site" evidence="1">
    <location>
        <position position="364"/>
    </location>
    <ligand>
        <name>Mg(2+)</name>
        <dbReference type="ChEBI" id="CHEBI:18420"/>
    </ligand>
</feature>
<feature type="site" description="Important for substrate recognition" evidence="1">
    <location>
        <position position="512"/>
    </location>
</feature>
<feature type="modified residue" description="Phosphoserine" evidence="3">
    <location>
        <position position="178"/>
    </location>
</feature>
<feature type="modified residue" description="Phosphoserine" evidence="15">
    <location>
        <position position="291"/>
    </location>
</feature>
<feature type="lipid moiety-binding region" description="S-palmitoyl cysteine" evidence="1">
    <location>
        <position position="53"/>
    </location>
</feature>
<feature type="lipid moiety-binding region" description="S-palmitoyl cysteine" evidence="1">
    <location>
        <position position="54"/>
    </location>
</feature>
<feature type="lipid moiety-binding region" description="S-palmitoyl cysteine" evidence="1">
    <location>
        <position position="59"/>
    </location>
</feature>
<feature type="lipid moiety-binding region" description="S-palmitoyl cysteine" evidence="1">
    <location>
        <position position="397"/>
    </location>
</feature>
<feature type="lipid moiety-binding region" description="S-palmitoyl cysteine" evidence="1">
    <location>
        <position position="398"/>
    </location>
</feature>
<feature type="splice variant" id="VSP_054334" description="In isoform 2." evidence="10">
    <location>
        <begin position="541"/>
        <end position="548"/>
    </location>
</feature>
<feature type="strand" evidence="16">
    <location>
        <begin position="122"/>
        <end position="133"/>
    </location>
</feature>
<feature type="helix" evidence="16">
    <location>
        <begin position="136"/>
        <end position="138"/>
    </location>
</feature>
<feature type="helix" evidence="16">
    <location>
        <begin position="147"/>
        <end position="163"/>
    </location>
</feature>
<feature type="strand" evidence="16">
    <location>
        <begin position="343"/>
        <end position="352"/>
    </location>
</feature>
<feature type="strand" evidence="16">
    <location>
        <begin position="359"/>
        <end position="365"/>
    </location>
</feature>
<feature type="helix" evidence="16">
    <location>
        <begin position="368"/>
        <end position="378"/>
    </location>
</feature>
<feature type="turn" evidence="16">
    <location>
        <begin position="379"/>
        <end position="381"/>
    </location>
</feature>
<feature type="strand" evidence="16">
    <location>
        <begin position="383"/>
        <end position="386"/>
    </location>
</feature>
<feature type="helix" evidence="16">
    <location>
        <begin position="389"/>
        <end position="392"/>
    </location>
</feature>
<feature type="strand" evidence="16">
    <location>
        <begin position="408"/>
        <end position="413"/>
    </location>
</feature>
<feature type="strand" evidence="16">
    <location>
        <begin position="415"/>
        <end position="422"/>
    </location>
</feature>
<feature type="strand" evidence="16">
    <location>
        <begin position="436"/>
        <end position="446"/>
    </location>
</feature>
<feature type="strand" evidence="16">
    <location>
        <begin position="452"/>
        <end position="461"/>
    </location>
</feature>
<feature type="helix" evidence="16">
    <location>
        <begin position="469"/>
        <end position="489"/>
    </location>
</feature>
<feature type="strand" evidence="16">
    <location>
        <begin position="500"/>
        <end position="510"/>
    </location>
</feature>
<feature type="helix" evidence="16">
    <location>
        <begin position="518"/>
        <end position="520"/>
    </location>
</feature>
<feature type="helix" evidence="16">
    <location>
        <begin position="521"/>
        <end position="524"/>
    </location>
</feature>
<feature type="helix" evidence="16">
    <location>
        <begin position="528"/>
        <end position="531"/>
    </location>
</feature>
<feature type="strand" evidence="16">
    <location>
        <begin position="537"/>
        <end position="539"/>
    </location>
</feature>
<feature type="helix" evidence="16">
    <location>
        <begin position="565"/>
        <end position="572"/>
    </location>
</feature>
<feature type="helix" evidence="16">
    <location>
        <begin position="575"/>
        <end position="581"/>
    </location>
</feature>
<feature type="turn" evidence="16">
    <location>
        <begin position="588"/>
        <end position="590"/>
    </location>
</feature>
<feature type="strand" evidence="16">
    <location>
        <begin position="591"/>
        <end position="593"/>
    </location>
</feature>
<feature type="helix" evidence="16">
    <location>
        <begin position="596"/>
        <end position="598"/>
    </location>
</feature>
<feature type="strand" evidence="16">
    <location>
        <begin position="607"/>
        <end position="616"/>
    </location>
</feature>
<feature type="strand" evidence="16">
    <location>
        <begin position="620"/>
        <end position="630"/>
    </location>
</feature>
<feature type="turn" evidence="16">
    <location>
        <begin position="632"/>
        <end position="636"/>
    </location>
</feature>
<feature type="strand" evidence="16">
    <location>
        <begin position="642"/>
        <end position="650"/>
    </location>
</feature>
<dbReference type="EC" id="3.1.4.12" evidence="8"/>
<dbReference type="EMBL" id="AJ250460">
    <property type="protein sequence ID" value="CAB92964.1"/>
    <property type="molecule type" value="mRNA"/>
</dbReference>
<dbReference type="EMBL" id="AC099521">
    <property type="status" value="NOT_ANNOTATED_CDS"/>
    <property type="molecule type" value="Genomic_DNA"/>
</dbReference>
<dbReference type="EMBL" id="BC112238">
    <property type="protein sequence ID" value="AAI12239.1"/>
    <property type="molecule type" value="mRNA"/>
</dbReference>
<dbReference type="EMBL" id="BC143631">
    <property type="protein sequence ID" value="AAI43632.1"/>
    <property type="molecule type" value="mRNA"/>
</dbReference>
<dbReference type="CCDS" id="CCDS10867.1">
    <molecule id="Q9NY59-1"/>
</dbReference>
<dbReference type="RefSeq" id="NP_061137.1">
    <molecule id="Q9NY59-1"/>
    <property type="nucleotide sequence ID" value="NM_018667.4"/>
</dbReference>
<dbReference type="RefSeq" id="XP_005256088.1">
    <property type="nucleotide sequence ID" value="XM_005256031.3"/>
</dbReference>
<dbReference type="RefSeq" id="XP_005256089.1">
    <molecule id="Q9NY59-1"/>
    <property type="nucleotide sequence ID" value="XM_005256032.4"/>
</dbReference>
<dbReference type="RefSeq" id="XP_011521509.1">
    <molecule id="Q9NY59-1"/>
    <property type="nucleotide sequence ID" value="XM_011523207.2"/>
</dbReference>
<dbReference type="RefSeq" id="XP_011521510.1">
    <property type="nucleotide sequence ID" value="XM_011523208.2"/>
</dbReference>
<dbReference type="RefSeq" id="XP_011521511.1">
    <property type="nucleotide sequence ID" value="XM_011523209.2"/>
</dbReference>
<dbReference type="RefSeq" id="XP_016878894.1">
    <property type="nucleotide sequence ID" value="XM_017023405.1"/>
</dbReference>
<dbReference type="RefSeq" id="XP_016878895.1">
    <molecule id="Q9NY59-1"/>
    <property type="nucleotide sequence ID" value="XM_017023406.2"/>
</dbReference>
<dbReference type="RefSeq" id="XP_016878896.1">
    <property type="nucleotide sequence ID" value="XM_017023407.1"/>
</dbReference>
<dbReference type="RefSeq" id="XP_016878897.1">
    <property type="nucleotide sequence ID" value="XM_017023408.1"/>
</dbReference>
<dbReference type="RefSeq" id="XP_047290292.1">
    <molecule id="Q9NY59-1"/>
    <property type="nucleotide sequence ID" value="XM_047434336.1"/>
</dbReference>
<dbReference type="RefSeq" id="XP_047290293.1">
    <molecule id="Q9NY59-1"/>
    <property type="nucleotide sequence ID" value="XM_047434337.1"/>
</dbReference>
<dbReference type="RefSeq" id="XP_047290294.1">
    <molecule id="Q9NY59-1"/>
    <property type="nucleotide sequence ID" value="XM_047434338.1"/>
</dbReference>
<dbReference type="RefSeq" id="XP_047290295.1">
    <molecule id="Q9NY59-1"/>
    <property type="nucleotide sequence ID" value="XM_047434339.1"/>
</dbReference>
<dbReference type="RefSeq" id="XP_047290296.1">
    <molecule id="Q9NY59-1"/>
    <property type="nucleotide sequence ID" value="XM_047434340.1"/>
</dbReference>
<dbReference type="RefSeq" id="XP_047290297.1">
    <molecule id="Q9NY59-1"/>
    <property type="nucleotide sequence ID" value="XM_047434341.1"/>
</dbReference>
<dbReference type="RefSeq" id="XP_054169385.1">
    <molecule id="Q9NY59-1"/>
    <property type="nucleotide sequence ID" value="XM_054313410.1"/>
</dbReference>
<dbReference type="RefSeq" id="XP_054169386.1">
    <molecule id="Q9NY59-1"/>
    <property type="nucleotide sequence ID" value="XM_054313411.1"/>
</dbReference>
<dbReference type="RefSeq" id="XP_054169387.1">
    <molecule id="Q9NY59-1"/>
    <property type="nucleotide sequence ID" value="XM_054313412.1"/>
</dbReference>
<dbReference type="RefSeq" id="XP_054169388.1">
    <molecule id="Q9NY59-1"/>
    <property type="nucleotide sequence ID" value="XM_054313413.1"/>
</dbReference>
<dbReference type="RefSeq" id="XP_054169389.1">
    <molecule id="Q9NY59-1"/>
    <property type="nucleotide sequence ID" value="XM_054313414.1"/>
</dbReference>
<dbReference type="RefSeq" id="XP_054169390.1">
    <molecule id="Q9NY59-1"/>
    <property type="nucleotide sequence ID" value="XM_054313415.1"/>
</dbReference>
<dbReference type="RefSeq" id="XP_054169391.1">
    <molecule id="Q9NY59-1"/>
    <property type="nucleotide sequence ID" value="XM_054313416.1"/>
</dbReference>
<dbReference type="RefSeq" id="XP_054169392.1">
    <molecule id="Q9NY59-1"/>
    <property type="nucleotide sequence ID" value="XM_054313417.1"/>
</dbReference>
<dbReference type="RefSeq" id="XP_054169393.1">
    <molecule id="Q9NY59-1"/>
    <property type="nucleotide sequence ID" value="XM_054313418.1"/>
</dbReference>
<dbReference type="PDB" id="5UVG">
    <property type="method" value="X-ray"/>
    <property type="resolution" value="1.85 A"/>
    <property type="chains" value="A=117-651"/>
</dbReference>
<dbReference type="PDBsum" id="5UVG"/>
<dbReference type="SMR" id="Q9NY59"/>
<dbReference type="BioGRID" id="120692">
    <property type="interactions" value="33"/>
</dbReference>
<dbReference type="DIP" id="DIP-60431N"/>
<dbReference type="FunCoup" id="Q9NY59">
    <property type="interactions" value="543"/>
</dbReference>
<dbReference type="IntAct" id="Q9NY59">
    <property type="interactions" value="32"/>
</dbReference>
<dbReference type="STRING" id="9606.ENSP00000219334"/>
<dbReference type="BindingDB" id="Q9NY59"/>
<dbReference type="ChEMBL" id="CHEMBL4523470"/>
<dbReference type="DrugBank" id="DB00144">
    <property type="generic name" value="Phosphatidyl serine"/>
</dbReference>
<dbReference type="SwissLipids" id="SLP:000001111"/>
<dbReference type="iPTMnet" id="Q9NY59"/>
<dbReference type="PhosphoSitePlus" id="Q9NY59"/>
<dbReference type="SwissPalm" id="Q9NY59"/>
<dbReference type="BioMuta" id="SMPD3"/>
<dbReference type="DMDM" id="73921262"/>
<dbReference type="jPOST" id="Q9NY59"/>
<dbReference type="MassIVE" id="Q9NY59"/>
<dbReference type="PaxDb" id="9606-ENSP00000219334"/>
<dbReference type="PeptideAtlas" id="Q9NY59"/>
<dbReference type="ProteomicsDB" id="7214"/>
<dbReference type="ProteomicsDB" id="83180">
    <molecule id="Q9NY59-1"/>
</dbReference>
<dbReference type="Antibodypedia" id="29783">
    <property type="antibodies" value="163 antibodies from 21 providers"/>
</dbReference>
<dbReference type="DNASU" id="55512"/>
<dbReference type="Ensembl" id="ENST00000219334.10">
    <molecule id="Q9NY59-1"/>
    <property type="protein sequence ID" value="ENSP00000219334.5"/>
    <property type="gene ID" value="ENSG00000103056.12"/>
</dbReference>
<dbReference type="Ensembl" id="ENST00000563226.1">
    <molecule id="Q9NY59-2"/>
    <property type="protein sequence ID" value="ENSP00000455955.1"/>
    <property type="gene ID" value="ENSG00000103056.12"/>
</dbReference>
<dbReference type="GeneID" id="55512"/>
<dbReference type="KEGG" id="hsa:55512"/>
<dbReference type="MANE-Select" id="ENST00000219334.10">
    <property type="protein sequence ID" value="ENSP00000219334.5"/>
    <property type="RefSeq nucleotide sequence ID" value="NM_018667.4"/>
    <property type="RefSeq protein sequence ID" value="NP_061137.1"/>
</dbReference>
<dbReference type="UCSC" id="uc002ewa.4">
    <molecule id="Q9NY59-1"/>
    <property type="organism name" value="human"/>
</dbReference>
<dbReference type="AGR" id="HGNC:14240"/>
<dbReference type="CTD" id="55512"/>
<dbReference type="DisGeNET" id="55512"/>
<dbReference type="GeneCards" id="SMPD3"/>
<dbReference type="HGNC" id="HGNC:14240">
    <property type="gene designation" value="SMPD3"/>
</dbReference>
<dbReference type="HPA" id="ENSG00000103056">
    <property type="expression patterns" value="Tissue enhanced (intestine, lymphoid tissue)"/>
</dbReference>
<dbReference type="MIM" id="605777">
    <property type="type" value="gene"/>
</dbReference>
<dbReference type="neXtProt" id="NX_Q9NY59"/>
<dbReference type="OpenTargets" id="ENSG00000103056"/>
<dbReference type="PharmGKB" id="PA37862"/>
<dbReference type="VEuPathDB" id="HostDB:ENSG00000103056"/>
<dbReference type="eggNOG" id="ENOG502QVS2">
    <property type="taxonomic scope" value="Eukaryota"/>
</dbReference>
<dbReference type="GeneTree" id="ENSGT00400000022168"/>
<dbReference type="HOGENOM" id="CLU_028243_0_0_1"/>
<dbReference type="InParanoid" id="Q9NY59"/>
<dbReference type="OMA" id="EENGHMS"/>
<dbReference type="OrthoDB" id="40902at2759"/>
<dbReference type="PAN-GO" id="Q9NY59">
    <property type="GO annotations" value="3 GO annotations based on evolutionary models"/>
</dbReference>
<dbReference type="PhylomeDB" id="Q9NY59"/>
<dbReference type="TreeFam" id="TF328678"/>
<dbReference type="BRENDA" id="3.1.4.12">
    <property type="organism ID" value="2681"/>
</dbReference>
<dbReference type="PathwayCommons" id="Q9NY59"/>
<dbReference type="Reactome" id="R-HSA-5626978">
    <property type="pathway name" value="TNFR1-mediated ceramide production"/>
</dbReference>
<dbReference type="Reactome" id="R-HSA-9840310">
    <property type="pathway name" value="Glycosphingolipid catabolism"/>
</dbReference>
<dbReference type="SignaLink" id="Q9NY59"/>
<dbReference type="UniPathway" id="UPA00222"/>
<dbReference type="BioGRID-ORCS" id="55512">
    <property type="hits" value="52 hits in 1156 CRISPR screens"/>
</dbReference>
<dbReference type="ChiTaRS" id="SMPD3">
    <property type="organism name" value="human"/>
</dbReference>
<dbReference type="GeneWiki" id="SMPD3"/>
<dbReference type="GenomeRNAi" id="55512"/>
<dbReference type="Pharos" id="Q9NY59">
    <property type="development level" value="Tchem"/>
</dbReference>
<dbReference type="PRO" id="PR:Q9NY59"/>
<dbReference type="Proteomes" id="UP000005640">
    <property type="component" value="Chromosome 16"/>
</dbReference>
<dbReference type="RNAct" id="Q9NY59">
    <property type="molecule type" value="protein"/>
</dbReference>
<dbReference type="Bgee" id="ENSG00000103056">
    <property type="expression patterns" value="Expressed in tibia and 136 other cell types or tissues"/>
</dbReference>
<dbReference type="ExpressionAtlas" id="Q9NY59">
    <property type="expression patterns" value="baseline and differential"/>
</dbReference>
<dbReference type="GO" id="GO:0005737">
    <property type="term" value="C:cytoplasm"/>
    <property type="evidence" value="ECO:0000318"/>
    <property type="project" value="GO_Central"/>
</dbReference>
<dbReference type="GO" id="GO:0005576">
    <property type="term" value="C:extracellular region"/>
    <property type="evidence" value="ECO:0007669"/>
    <property type="project" value="InterPro"/>
</dbReference>
<dbReference type="GO" id="GO:0000137">
    <property type="term" value="C:Golgi cis cisterna"/>
    <property type="evidence" value="ECO:0007669"/>
    <property type="project" value="Ensembl"/>
</dbReference>
<dbReference type="GO" id="GO:0000139">
    <property type="term" value="C:Golgi membrane"/>
    <property type="evidence" value="ECO:0007669"/>
    <property type="project" value="UniProtKB-SubCell"/>
</dbReference>
<dbReference type="GO" id="GO:0005886">
    <property type="term" value="C:plasma membrane"/>
    <property type="evidence" value="ECO:0000250"/>
    <property type="project" value="UniProtKB"/>
</dbReference>
<dbReference type="GO" id="GO:0042802">
    <property type="term" value="F:identical protein binding"/>
    <property type="evidence" value="ECO:0007669"/>
    <property type="project" value="Ensembl"/>
</dbReference>
<dbReference type="GO" id="GO:0046872">
    <property type="term" value="F:metal ion binding"/>
    <property type="evidence" value="ECO:0007669"/>
    <property type="project" value="UniProtKB-KW"/>
</dbReference>
<dbReference type="GO" id="GO:0061751">
    <property type="term" value="F:neutral sphingomyelin phosphodiesterase activity"/>
    <property type="evidence" value="ECO:0007669"/>
    <property type="project" value="Ensembl"/>
</dbReference>
<dbReference type="GO" id="GO:0070300">
    <property type="term" value="F:phosphatidic acid binding"/>
    <property type="evidence" value="ECO:0000250"/>
    <property type="project" value="UniProtKB"/>
</dbReference>
<dbReference type="GO" id="GO:0001786">
    <property type="term" value="F:phosphatidylserine binding"/>
    <property type="evidence" value="ECO:0000250"/>
    <property type="project" value="UniProtKB"/>
</dbReference>
<dbReference type="GO" id="GO:0008081">
    <property type="term" value="F:phosphoric diester hydrolase activity"/>
    <property type="evidence" value="ECO:0000314"/>
    <property type="project" value="UniProtKB"/>
</dbReference>
<dbReference type="GO" id="GO:0004767">
    <property type="term" value="F:sphingomyelin phosphodiesterase activity"/>
    <property type="evidence" value="ECO:0000314"/>
    <property type="project" value="UniProtKB"/>
</dbReference>
<dbReference type="GO" id="GO:0030509">
    <property type="term" value="P:BMP signaling pathway"/>
    <property type="evidence" value="ECO:0007669"/>
    <property type="project" value="Ensembl"/>
</dbReference>
<dbReference type="GO" id="GO:0098868">
    <property type="term" value="P:bone growth"/>
    <property type="evidence" value="ECO:0007669"/>
    <property type="project" value="Ensembl"/>
</dbReference>
<dbReference type="GO" id="GO:0030282">
    <property type="term" value="P:bone mineralization"/>
    <property type="evidence" value="ECO:0007669"/>
    <property type="project" value="Ensembl"/>
</dbReference>
<dbReference type="GO" id="GO:0070301">
    <property type="term" value="P:cellular response to hydrogen peroxide"/>
    <property type="evidence" value="ECO:0007669"/>
    <property type="project" value="Ensembl"/>
</dbReference>
<dbReference type="GO" id="GO:0071286">
    <property type="term" value="P:cellular response to magnesium ion"/>
    <property type="evidence" value="ECO:0007669"/>
    <property type="project" value="Ensembl"/>
</dbReference>
<dbReference type="GO" id="GO:0140052">
    <property type="term" value="P:cellular response to oxidised low-density lipoprotein particle stimulus"/>
    <property type="evidence" value="ECO:0007669"/>
    <property type="project" value="Ensembl"/>
</dbReference>
<dbReference type="GO" id="GO:1901653">
    <property type="term" value="P:cellular response to peptide"/>
    <property type="evidence" value="ECO:0007669"/>
    <property type="project" value="Ensembl"/>
</dbReference>
<dbReference type="GO" id="GO:0071461">
    <property type="term" value="P:cellular response to redox state"/>
    <property type="evidence" value="ECO:0007669"/>
    <property type="project" value="Ensembl"/>
</dbReference>
<dbReference type="GO" id="GO:0071356">
    <property type="term" value="P:cellular response to tumor necrosis factor"/>
    <property type="evidence" value="ECO:0007669"/>
    <property type="project" value="Ensembl"/>
</dbReference>
<dbReference type="GO" id="GO:0006672">
    <property type="term" value="P:ceramide metabolic process"/>
    <property type="evidence" value="ECO:0007669"/>
    <property type="project" value="Ensembl"/>
</dbReference>
<dbReference type="GO" id="GO:0003433">
    <property type="term" value="P:chondrocyte development involved in endochondral bone morphogenesis"/>
    <property type="evidence" value="ECO:0007669"/>
    <property type="project" value="Ensembl"/>
</dbReference>
<dbReference type="GO" id="GO:0032963">
    <property type="term" value="P:collagen metabolic process"/>
    <property type="evidence" value="ECO:0007669"/>
    <property type="project" value="Ensembl"/>
</dbReference>
<dbReference type="GO" id="GO:0097187">
    <property type="term" value="P:dentinogenesis"/>
    <property type="evidence" value="ECO:0007669"/>
    <property type="project" value="Ensembl"/>
</dbReference>
<dbReference type="GO" id="GO:0071897">
    <property type="term" value="P:DNA biosynthetic process"/>
    <property type="evidence" value="ECO:0007669"/>
    <property type="project" value="Ensembl"/>
</dbReference>
<dbReference type="GO" id="GO:0001958">
    <property type="term" value="P:endochondral ossification"/>
    <property type="evidence" value="ECO:0007669"/>
    <property type="project" value="Ensembl"/>
</dbReference>
<dbReference type="GO" id="GO:0085029">
    <property type="term" value="P:extracellular matrix assembly"/>
    <property type="evidence" value="ECO:0007669"/>
    <property type="project" value="Ensembl"/>
</dbReference>
<dbReference type="GO" id="GO:0070314">
    <property type="term" value="P:G1 to G0 transition"/>
    <property type="evidence" value="ECO:0007669"/>
    <property type="project" value="Ensembl"/>
</dbReference>
<dbReference type="GO" id="GO:0002244">
    <property type="term" value="P:hematopoietic progenitor cell differentiation"/>
    <property type="evidence" value="ECO:0007669"/>
    <property type="project" value="Ensembl"/>
</dbReference>
<dbReference type="GO" id="GO:0048286">
    <property type="term" value="P:lung alveolus development"/>
    <property type="evidence" value="ECO:0007669"/>
    <property type="project" value="Ensembl"/>
</dbReference>
<dbReference type="GO" id="GO:0140014">
    <property type="term" value="P:mitotic nuclear division"/>
    <property type="evidence" value="ECO:0007669"/>
    <property type="project" value="Ensembl"/>
</dbReference>
<dbReference type="GO" id="GO:0035264">
    <property type="term" value="P:multicellular organism growth"/>
    <property type="evidence" value="ECO:0007669"/>
    <property type="project" value="Ensembl"/>
</dbReference>
<dbReference type="GO" id="GO:1900126">
    <property type="term" value="P:negative regulation of hyaluronan biosynthetic process"/>
    <property type="evidence" value="ECO:0007669"/>
    <property type="project" value="Ensembl"/>
</dbReference>
<dbReference type="GO" id="GO:0051898">
    <property type="term" value="P:negative regulation of phosphatidylinositol 3-kinase/protein kinase B signal transduction"/>
    <property type="evidence" value="ECO:0007669"/>
    <property type="project" value="Ensembl"/>
</dbReference>
<dbReference type="GO" id="GO:0030072">
    <property type="term" value="P:peptide hormone secretion"/>
    <property type="evidence" value="ECO:0007669"/>
    <property type="project" value="Ensembl"/>
</dbReference>
<dbReference type="GO" id="GO:0048008">
    <property type="term" value="P:platelet-derived growth factor receptor signaling pathway"/>
    <property type="evidence" value="ECO:0007669"/>
    <property type="project" value="Ensembl"/>
</dbReference>
<dbReference type="GO" id="GO:0015774">
    <property type="term" value="P:polysaccharide transport"/>
    <property type="evidence" value="ECO:0007669"/>
    <property type="project" value="Ensembl"/>
</dbReference>
<dbReference type="GO" id="GO:1903543">
    <property type="term" value="P:positive regulation of exosomal secretion"/>
    <property type="evidence" value="ECO:0000250"/>
    <property type="project" value="BHF-UCL"/>
</dbReference>
<dbReference type="GO" id="GO:0045840">
    <property type="term" value="P:positive regulation of mitotic nuclear division"/>
    <property type="evidence" value="ECO:0007669"/>
    <property type="project" value="Ensembl"/>
</dbReference>
<dbReference type="GO" id="GO:0048661">
    <property type="term" value="P:positive regulation of smooth muscle cell proliferation"/>
    <property type="evidence" value="ECO:0007669"/>
    <property type="project" value="Ensembl"/>
</dbReference>
<dbReference type="GO" id="GO:0061035">
    <property type="term" value="P:regulation of cartilage development"/>
    <property type="evidence" value="ECO:0007669"/>
    <property type="project" value="Ensembl"/>
</dbReference>
<dbReference type="GO" id="GO:0002685">
    <property type="term" value="P:regulation of leukocyte migration"/>
    <property type="evidence" value="ECO:0007669"/>
    <property type="project" value="Ensembl"/>
</dbReference>
<dbReference type="GO" id="GO:0090520">
    <property type="term" value="P:sphingolipid mediated signaling pathway"/>
    <property type="evidence" value="ECO:0007669"/>
    <property type="project" value="Ensembl"/>
</dbReference>
<dbReference type="GO" id="GO:0006685">
    <property type="term" value="P:sphingomyelin catabolic process"/>
    <property type="evidence" value="ECO:0000314"/>
    <property type="project" value="UniProtKB"/>
</dbReference>
<dbReference type="GO" id="GO:0006684">
    <property type="term" value="P:sphingomyelin metabolic process"/>
    <property type="evidence" value="ECO:0000250"/>
    <property type="project" value="UniProtKB"/>
</dbReference>
<dbReference type="CDD" id="cd09078">
    <property type="entry name" value="nSMase"/>
    <property type="match status" value="1"/>
</dbReference>
<dbReference type="FunFam" id="3.60.10.10:FF:000015">
    <property type="entry name" value="sphingomyelin phosphodiesterase 3"/>
    <property type="match status" value="1"/>
</dbReference>
<dbReference type="Gene3D" id="3.60.10.10">
    <property type="entry name" value="Endonuclease/exonuclease/phosphatase"/>
    <property type="match status" value="1"/>
</dbReference>
<dbReference type="InterPro" id="IPR036691">
    <property type="entry name" value="Endo/exonu/phosph_ase_sf"/>
</dbReference>
<dbReference type="InterPro" id="IPR005135">
    <property type="entry name" value="Endo/exonuclease/phosphatase"/>
</dbReference>
<dbReference type="InterPro" id="IPR038772">
    <property type="entry name" value="Sph/SMPD2-like"/>
</dbReference>
<dbReference type="InterPro" id="IPR017766">
    <property type="entry name" value="Sphingomyelinase/PLipase_C"/>
</dbReference>
<dbReference type="PANTHER" id="PTHR16320:SF8">
    <property type="entry name" value="SPHINGOMYELIN PHOSPHODIESTERASE 3"/>
    <property type="match status" value="1"/>
</dbReference>
<dbReference type="PANTHER" id="PTHR16320">
    <property type="entry name" value="SPHINGOMYELINASE FAMILY MEMBER"/>
    <property type="match status" value="1"/>
</dbReference>
<dbReference type="Pfam" id="PF03372">
    <property type="entry name" value="Exo_endo_phos"/>
    <property type="match status" value="1"/>
</dbReference>
<dbReference type="SUPFAM" id="SSF56219">
    <property type="entry name" value="DNase I-like"/>
    <property type="match status" value="1"/>
</dbReference>
<evidence type="ECO:0000250" key="1"/>
<evidence type="ECO:0000250" key="2">
    <source>
        <dbReference type="UniProtKB" id="O35049"/>
    </source>
</evidence>
<evidence type="ECO:0000250" key="3">
    <source>
        <dbReference type="UniProtKB" id="Q9JJY3"/>
    </source>
</evidence>
<evidence type="ECO:0000255" key="4"/>
<evidence type="ECO:0000256" key="5">
    <source>
        <dbReference type="SAM" id="MobiDB-lite"/>
    </source>
</evidence>
<evidence type="ECO:0000269" key="6">
    <source>
    </source>
</evidence>
<evidence type="ECO:0000269" key="7">
    <source>
    </source>
</evidence>
<evidence type="ECO:0000269" key="8">
    <source>
    </source>
</evidence>
<evidence type="ECO:0000303" key="9">
    <source>
    </source>
</evidence>
<evidence type="ECO:0000303" key="10">
    <source>
    </source>
</evidence>
<evidence type="ECO:0000305" key="11"/>
<evidence type="ECO:0000305" key="12">
    <source>
    </source>
</evidence>
<evidence type="ECO:0000305" key="13">
    <source>
    </source>
</evidence>
<evidence type="ECO:0000312" key="14">
    <source>
        <dbReference type="HGNC" id="HGNC:14240"/>
    </source>
</evidence>
<evidence type="ECO:0007744" key="15">
    <source>
    </source>
</evidence>
<evidence type="ECO:0007829" key="16">
    <source>
        <dbReference type="PDB" id="5UVG"/>
    </source>
</evidence>
<reference key="1">
    <citation type="journal article" date="2000" name="Proc. Natl. Acad. Sci. U.S.A.">
        <title>Cloning and characterization of the mammalian brain-specific, Mg2+-dependent neutral sphingomyelinase.</title>
        <authorList>
            <person name="Hofmann K."/>
            <person name="Tomiuk S."/>
            <person name="Wolff G."/>
            <person name="Stoffel W."/>
        </authorList>
    </citation>
    <scope>NUCLEOTIDE SEQUENCE [MRNA] (ISOFORM 1)</scope>
    <scope>FUNCTION</scope>
    <scope>COFACTOR</scope>
    <scope>ACTIVITY REGULATION</scope>
    <scope>SUBCELLULAR LOCATION</scope>
    <scope>TISSUE SPECIFICITY</scope>
</reference>
<reference key="2">
    <citation type="journal article" date="2004" name="Nature">
        <title>The sequence and analysis of duplication-rich human chromosome 16.</title>
        <authorList>
            <person name="Martin J."/>
            <person name="Han C."/>
            <person name="Gordon L.A."/>
            <person name="Terry A."/>
            <person name="Prabhakar S."/>
            <person name="She X."/>
            <person name="Xie G."/>
            <person name="Hellsten U."/>
            <person name="Chan Y.M."/>
            <person name="Altherr M."/>
            <person name="Couronne O."/>
            <person name="Aerts A."/>
            <person name="Bajorek E."/>
            <person name="Black S."/>
            <person name="Blumer H."/>
            <person name="Branscomb E."/>
            <person name="Brown N.C."/>
            <person name="Bruno W.J."/>
            <person name="Buckingham J.M."/>
            <person name="Callen D.F."/>
            <person name="Campbell C.S."/>
            <person name="Campbell M.L."/>
            <person name="Campbell E.W."/>
            <person name="Caoile C."/>
            <person name="Challacombe J.F."/>
            <person name="Chasteen L.A."/>
            <person name="Chertkov O."/>
            <person name="Chi H.C."/>
            <person name="Christensen M."/>
            <person name="Clark L.M."/>
            <person name="Cohn J.D."/>
            <person name="Denys M."/>
            <person name="Detter J.C."/>
            <person name="Dickson M."/>
            <person name="Dimitrijevic-Bussod M."/>
            <person name="Escobar J."/>
            <person name="Fawcett J.J."/>
            <person name="Flowers D."/>
            <person name="Fotopulos D."/>
            <person name="Glavina T."/>
            <person name="Gomez M."/>
            <person name="Gonzales E."/>
            <person name="Goodstein D."/>
            <person name="Goodwin L.A."/>
            <person name="Grady D.L."/>
            <person name="Grigoriev I."/>
            <person name="Groza M."/>
            <person name="Hammon N."/>
            <person name="Hawkins T."/>
            <person name="Haydu L."/>
            <person name="Hildebrand C.E."/>
            <person name="Huang W."/>
            <person name="Israni S."/>
            <person name="Jett J."/>
            <person name="Jewett P.B."/>
            <person name="Kadner K."/>
            <person name="Kimball H."/>
            <person name="Kobayashi A."/>
            <person name="Krawczyk M.-C."/>
            <person name="Leyba T."/>
            <person name="Longmire J.L."/>
            <person name="Lopez F."/>
            <person name="Lou Y."/>
            <person name="Lowry S."/>
            <person name="Ludeman T."/>
            <person name="Manohar C.F."/>
            <person name="Mark G.A."/>
            <person name="McMurray K.L."/>
            <person name="Meincke L.J."/>
            <person name="Morgan J."/>
            <person name="Moyzis R.K."/>
            <person name="Mundt M.O."/>
            <person name="Munk A.C."/>
            <person name="Nandkeshwar R.D."/>
            <person name="Pitluck S."/>
            <person name="Pollard M."/>
            <person name="Predki P."/>
            <person name="Parson-Quintana B."/>
            <person name="Ramirez L."/>
            <person name="Rash S."/>
            <person name="Retterer J."/>
            <person name="Ricke D.O."/>
            <person name="Robinson D.L."/>
            <person name="Rodriguez A."/>
            <person name="Salamov A."/>
            <person name="Saunders E.H."/>
            <person name="Scott D."/>
            <person name="Shough T."/>
            <person name="Stallings R.L."/>
            <person name="Stalvey M."/>
            <person name="Sutherland R.D."/>
            <person name="Tapia R."/>
            <person name="Tesmer J.G."/>
            <person name="Thayer N."/>
            <person name="Thompson L.S."/>
            <person name="Tice H."/>
            <person name="Torney D.C."/>
            <person name="Tran-Gyamfi M."/>
            <person name="Tsai M."/>
            <person name="Ulanovsky L.E."/>
            <person name="Ustaszewska A."/>
            <person name="Vo N."/>
            <person name="White P.S."/>
            <person name="Williams A.L."/>
            <person name="Wills P.L."/>
            <person name="Wu J.-R."/>
            <person name="Wu K."/>
            <person name="Yang J."/>
            <person name="DeJong P."/>
            <person name="Bruce D."/>
            <person name="Doggett N.A."/>
            <person name="Deaven L."/>
            <person name="Schmutz J."/>
            <person name="Grimwood J."/>
            <person name="Richardson P."/>
            <person name="Rokhsar D.S."/>
            <person name="Eichler E.E."/>
            <person name="Gilna P."/>
            <person name="Lucas S.M."/>
            <person name="Myers R.M."/>
            <person name="Rubin E.M."/>
            <person name="Pennacchio L.A."/>
        </authorList>
    </citation>
    <scope>NUCLEOTIDE SEQUENCE [LARGE SCALE GENOMIC DNA]</scope>
</reference>
<reference key="3">
    <citation type="journal article" date="2004" name="Genome Res.">
        <title>The status, quality, and expansion of the NIH full-length cDNA project: the Mammalian Gene Collection (MGC).</title>
        <authorList>
            <consortium name="The MGC Project Team"/>
        </authorList>
    </citation>
    <scope>NUCLEOTIDE SEQUENCE [LARGE SCALE MRNA] (ISOFORMS 1 AND 2)</scope>
    <source>
        <tissue>Brain</tissue>
    </source>
</reference>
<reference key="4">
    <citation type="journal article" date="2004" name="FEBS Lett.">
        <title>Hydrolysis of sphingosylphosphocholine by neutral sphingomyelinases.</title>
        <authorList>
            <person name="Miura Y."/>
            <person name="Gotoh E."/>
            <person name="Nara F."/>
            <person name="Nishijima M."/>
            <person name="Hanada K."/>
        </authorList>
    </citation>
    <scope>FUNCTION</scope>
    <scope>CATALYTIC ACTIVITY</scope>
    <scope>BIOPHYSICOCHEMICAL PROPERTIES</scope>
    <scope>PATHWAY</scope>
</reference>
<reference key="5">
    <citation type="journal article" date="2004" name="J. Biol. Chem.">
        <title>Role for mammalian neutral sphingomyelinase 2 in confluence-induced growth arrest of MCF7 cells.</title>
        <authorList>
            <person name="Marchesini N."/>
            <person name="Osta W."/>
            <person name="Bielawski J."/>
            <person name="Luberto C."/>
            <person name="Obeid L.M."/>
            <person name="Hannun Y.A."/>
        </authorList>
    </citation>
    <scope>FUNCTION</scope>
    <scope>COFACTOR</scope>
    <scope>SUBCELLULAR LOCATION</scope>
    <scope>CATALYTIC ACTIVITY</scope>
    <scope>PATHWAY</scope>
</reference>
<reference key="6">
    <citation type="journal article" date="2007" name="FEBS Lett.">
        <title>Analysis of membrane topology of neutral sphingomyelinase 2.</title>
        <authorList>
            <person name="Tani M."/>
            <person name="Hannun Y.A."/>
        </authorList>
    </citation>
    <scope>TOPOLOGY</scope>
</reference>
<reference key="7">
    <citation type="journal article" date="2014" name="J. Proteomics">
        <title>An enzyme assisted RP-RPLC approach for in-depth analysis of human liver phosphoproteome.</title>
        <authorList>
            <person name="Bian Y."/>
            <person name="Song C."/>
            <person name="Cheng K."/>
            <person name="Dong M."/>
            <person name="Wang F."/>
            <person name="Huang J."/>
            <person name="Sun D."/>
            <person name="Wang L."/>
            <person name="Ye M."/>
            <person name="Zou H."/>
        </authorList>
    </citation>
    <scope>PHOSPHORYLATION [LARGE SCALE ANALYSIS] AT SER-291</scope>
    <scope>IDENTIFICATION BY MASS SPECTROMETRY [LARGE SCALE ANALYSIS]</scope>
    <source>
        <tissue>Liver</tissue>
    </source>
</reference>